<dbReference type="EMBL" id="DQ117594">
    <property type="protein sequence ID" value="AAZ40520.1"/>
    <property type="molecule type" value="mRNA"/>
</dbReference>
<dbReference type="EMBL" id="DQ117595">
    <property type="protein sequence ID" value="AAZ40521.1"/>
    <property type="molecule type" value="mRNA"/>
</dbReference>
<dbReference type="EMBL" id="DQ117596">
    <property type="protein sequence ID" value="AAZ40522.1"/>
    <property type="molecule type" value="mRNA"/>
</dbReference>
<dbReference type="SMR" id="Q2LKV5"/>
<dbReference type="ComplexPortal" id="CPX-4269">
    <property type="entry name" value="NLRP1b inflammasome, allele-3 variant"/>
</dbReference>
<dbReference type="AGR" id="MGI:3582959"/>
<dbReference type="MGI" id="MGI:3582959">
    <property type="gene designation" value="Nlrp1b"/>
</dbReference>
<dbReference type="OrthoDB" id="428577at2759"/>
<dbReference type="GO" id="GO:0005737">
    <property type="term" value="C:cytoplasm"/>
    <property type="evidence" value="ECO:0000303"/>
    <property type="project" value="ComplexPortal"/>
</dbReference>
<dbReference type="GO" id="GO:0072558">
    <property type="term" value="C:NLRP1 inflammasome complex"/>
    <property type="evidence" value="ECO:0000303"/>
    <property type="project" value="ComplexPortal"/>
</dbReference>
<dbReference type="GO" id="GO:0005524">
    <property type="term" value="F:ATP binding"/>
    <property type="evidence" value="ECO:0007669"/>
    <property type="project" value="UniProtKB-KW"/>
</dbReference>
<dbReference type="GO" id="GO:0045087">
    <property type="term" value="P:innate immune response"/>
    <property type="evidence" value="ECO:0007669"/>
    <property type="project" value="UniProtKB-KW"/>
</dbReference>
<dbReference type="GO" id="GO:0002221">
    <property type="term" value="P:pattern recognition receptor signaling pathway"/>
    <property type="evidence" value="ECO:0000303"/>
    <property type="project" value="ComplexPortal"/>
</dbReference>
<dbReference type="GO" id="GO:0050729">
    <property type="term" value="P:positive regulation of inflammatory response"/>
    <property type="evidence" value="ECO:0000303"/>
    <property type="project" value="ComplexPortal"/>
</dbReference>
<dbReference type="GO" id="GO:0032731">
    <property type="term" value="P:positive regulation of interleukin-1 beta production"/>
    <property type="evidence" value="ECO:0000303"/>
    <property type="project" value="ComplexPortal"/>
</dbReference>
<dbReference type="GO" id="GO:0030163">
    <property type="term" value="P:protein catabolic process"/>
    <property type="evidence" value="ECO:0000315"/>
    <property type="project" value="MGI"/>
</dbReference>
<dbReference type="GO" id="GO:0070269">
    <property type="term" value="P:pyroptotic inflammatory response"/>
    <property type="evidence" value="ECO:0000315"/>
    <property type="project" value="MGI"/>
</dbReference>
<dbReference type="GO" id="GO:0042981">
    <property type="term" value="P:regulation of apoptotic process"/>
    <property type="evidence" value="ECO:0007669"/>
    <property type="project" value="InterPro"/>
</dbReference>
<dbReference type="CDD" id="cd08330">
    <property type="entry name" value="CARD_ASC_NALP1"/>
    <property type="match status" value="1"/>
</dbReference>
<dbReference type="FunFam" id="1.10.533.10:FF:000013">
    <property type="entry name" value="Apoptosis-associated speck-like protein containing a CARD"/>
    <property type="match status" value="1"/>
</dbReference>
<dbReference type="FunFam" id="3.40.50.300:FF:000897">
    <property type="entry name" value="NLR family pyrin domain containing 1"/>
    <property type="match status" value="1"/>
</dbReference>
<dbReference type="FunFam" id="3.80.10.10:FF:000622">
    <property type="entry name" value="NLR family, pyrin domain containing 1B, PWK/PhJ specific, allele 1"/>
    <property type="match status" value="1"/>
</dbReference>
<dbReference type="Gene3D" id="1.10.533.10">
    <property type="entry name" value="Death Domain, Fas"/>
    <property type="match status" value="1"/>
</dbReference>
<dbReference type="Gene3D" id="3.40.50.300">
    <property type="entry name" value="P-loop containing nucleotide triphosphate hydrolases"/>
    <property type="match status" value="1"/>
</dbReference>
<dbReference type="Gene3D" id="3.80.10.10">
    <property type="entry name" value="Ribonuclease Inhibitor"/>
    <property type="match status" value="1"/>
</dbReference>
<dbReference type="InterPro" id="IPR001315">
    <property type="entry name" value="CARD"/>
</dbReference>
<dbReference type="InterPro" id="IPR033516">
    <property type="entry name" value="CARD8/ASC/NALP1_CARD"/>
</dbReference>
<dbReference type="InterPro" id="IPR011029">
    <property type="entry name" value="DEATH-like_dom_sf"/>
</dbReference>
<dbReference type="InterPro" id="IPR025307">
    <property type="entry name" value="FIIND_dom"/>
</dbReference>
<dbReference type="InterPro" id="IPR032675">
    <property type="entry name" value="LRR_dom_sf"/>
</dbReference>
<dbReference type="InterPro" id="IPR007111">
    <property type="entry name" value="NACHT_NTPase"/>
</dbReference>
<dbReference type="InterPro" id="IPR041267">
    <property type="entry name" value="NLRP_HD2"/>
</dbReference>
<dbReference type="InterPro" id="IPR051249">
    <property type="entry name" value="NLRP_Inflammasome"/>
</dbReference>
<dbReference type="InterPro" id="IPR041075">
    <property type="entry name" value="NOD1/2_WH"/>
</dbReference>
<dbReference type="InterPro" id="IPR027417">
    <property type="entry name" value="P-loop_NTPase"/>
</dbReference>
<dbReference type="PANTHER" id="PTHR46985">
    <property type="entry name" value="NACHT, LRR AND PYD DOMAINS-CONTAINING PROTEIN 1"/>
    <property type="match status" value="1"/>
</dbReference>
<dbReference type="PANTHER" id="PTHR46985:SF6">
    <property type="entry name" value="NACHT, LRR AND PYD DOMAINS-CONTAINING PROTEIN 1B ALLELE 2"/>
    <property type="match status" value="1"/>
</dbReference>
<dbReference type="Pfam" id="PF00619">
    <property type="entry name" value="CARD"/>
    <property type="match status" value="1"/>
</dbReference>
<dbReference type="Pfam" id="PF13553">
    <property type="entry name" value="FIIND"/>
    <property type="match status" value="1"/>
</dbReference>
<dbReference type="Pfam" id="PF05729">
    <property type="entry name" value="NACHT"/>
    <property type="match status" value="1"/>
</dbReference>
<dbReference type="Pfam" id="PF17776">
    <property type="entry name" value="NLRC4_HD2"/>
    <property type="match status" value="1"/>
</dbReference>
<dbReference type="Pfam" id="PF17779">
    <property type="entry name" value="NOD2_WH"/>
    <property type="match status" value="1"/>
</dbReference>
<dbReference type="Pfam" id="PF23679">
    <property type="entry name" value="UPA-FIIND"/>
    <property type="match status" value="1"/>
</dbReference>
<dbReference type="PRINTS" id="PR00364">
    <property type="entry name" value="DISEASERSIST"/>
</dbReference>
<dbReference type="SMART" id="SM00368">
    <property type="entry name" value="LRR_RI"/>
    <property type="match status" value="3"/>
</dbReference>
<dbReference type="SUPFAM" id="SSF47986">
    <property type="entry name" value="DEATH domain"/>
    <property type="match status" value="1"/>
</dbReference>
<dbReference type="SUPFAM" id="SSF52540">
    <property type="entry name" value="P-loop containing nucleoside triphosphate hydrolases"/>
    <property type="match status" value="1"/>
</dbReference>
<dbReference type="SUPFAM" id="SSF52047">
    <property type="entry name" value="RNI-like"/>
    <property type="match status" value="1"/>
</dbReference>
<dbReference type="PROSITE" id="PS50209">
    <property type="entry name" value="CARD"/>
    <property type="match status" value="1"/>
</dbReference>
<dbReference type="PROSITE" id="PS51830">
    <property type="entry name" value="FIIND"/>
    <property type="match status" value="1"/>
</dbReference>
<dbReference type="PROSITE" id="PS50837">
    <property type="entry name" value="NACHT"/>
    <property type="match status" value="1"/>
</dbReference>
<keyword id="KW-0067">ATP-binding</keyword>
<keyword id="KW-0963">Cytoplasm</keyword>
<keyword id="KW-0391">Immunity</keyword>
<keyword id="KW-0395">Inflammatory response</keyword>
<keyword id="KW-0399">Innate immunity</keyword>
<keyword id="KW-0433">Leucine-rich repeat</keyword>
<keyword id="KW-0547">Nucleotide-binding</keyword>
<keyword id="KW-0677">Repeat</keyword>
<name>NL1B3_MOUSE</name>
<feature type="chain" id="PRO_0000435105" description="NACHT, LRR and PYD domains-containing protein 1b allele 3">
    <location>
        <begin position="1"/>
        <end position="1172"/>
    </location>
</feature>
<feature type="domain" description="NACHT" evidence="4">
    <location>
        <begin position="126"/>
        <end position="435"/>
    </location>
</feature>
<feature type="repeat" description="LRR 1">
    <location>
        <begin position="627"/>
        <end position="647"/>
    </location>
</feature>
<feature type="repeat" description="LRR 2">
    <location>
        <begin position="684"/>
        <end position="704"/>
    </location>
</feature>
<feature type="domain" description="FIIND" evidence="5">
    <location>
        <begin position="789"/>
        <end position="1072"/>
    </location>
</feature>
<feature type="domain" description="CARD" evidence="3">
    <location>
        <begin position="1082"/>
        <end position="1165"/>
    </location>
</feature>
<feature type="region of interest" description="Disordered" evidence="6">
    <location>
        <begin position="1"/>
        <end position="22"/>
    </location>
</feature>
<feature type="region of interest" description="ZU5" evidence="2">
    <location>
        <begin position="789"/>
        <end position="922"/>
    </location>
</feature>
<feature type="region of interest" description="UPA" evidence="2">
    <location>
        <begin position="923"/>
        <end position="1072"/>
    </location>
</feature>
<feature type="binding site" evidence="4">
    <location>
        <begin position="132"/>
        <end position="139"/>
    </location>
    <ligand>
        <name>ATP</name>
        <dbReference type="ChEBI" id="CHEBI:30616"/>
    </ligand>
</feature>
<feature type="site" description="Cleavage; by autolysis" evidence="5">
    <location>
        <begin position="922"/>
        <end position="923"/>
    </location>
</feature>
<feature type="mutagenesis site" description="Restores autocatalytic cleavage, as observed in allele 1, but not response to anthrax lethal toxin (LT), nor to metabolic inhibitors. Restores autocatalytic cleavage and IL1B release in response to LT; when associated with A-935 and N-965." evidence="9 10">
    <original>D</original>
    <variation>V</variation>
    <location>
        <position position="927"/>
    </location>
</feature>
<feature type="mutagenesis site" description="No effect; when associated with N-965. Restores autocatalytic cleavage and IL1B release in response to anthrax lethal toxin; when associated with V-927 and N-965." evidence="9">
    <original>D</original>
    <variation>A</variation>
    <location>
        <position position="935"/>
    </location>
</feature>
<feature type="mutagenesis site" description="Restores autocatalytic cleavage, as observed in allele 1, and produces constitutive IL1B release; when associated with V-927 and A-935." evidence="9">
    <original>S</original>
    <variation>N</variation>
    <location>
        <position position="965"/>
    </location>
</feature>
<proteinExistence type="evidence at protein level"/>
<evidence type="ECO:0000250" key="1">
    <source>
        <dbReference type="UniProtKB" id="Q2LKW6"/>
    </source>
</evidence>
<evidence type="ECO:0000250" key="2">
    <source>
        <dbReference type="UniProtKB" id="Q9C000"/>
    </source>
</evidence>
<evidence type="ECO:0000255" key="3">
    <source>
        <dbReference type="PROSITE-ProRule" id="PRU00046"/>
    </source>
</evidence>
<evidence type="ECO:0000255" key="4">
    <source>
        <dbReference type="PROSITE-ProRule" id="PRU00136"/>
    </source>
</evidence>
<evidence type="ECO:0000255" key="5">
    <source>
        <dbReference type="PROSITE-ProRule" id="PRU01174"/>
    </source>
</evidence>
<evidence type="ECO:0000256" key="6">
    <source>
        <dbReference type="SAM" id="MobiDB-lite"/>
    </source>
</evidence>
<evidence type="ECO:0000269" key="7">
    <source>
    </source>
</evidence>
<evidence type="ECO:0000269" key="8">
    <source>
    </source>
</evidence>
<evidence type="ECO:0000269" key="9">
    <source>
    </source>
</evidence>
<evidence type="ECO:0000269" key="10">
    <source>
    </source>
</evidence>
<evidence type="ECO:0000269" key="11">
    <source>
    </source>
</evidence>
<evidence type="ECO:0000269" key="12">
    <source>
    </source>
</evidence>
<evidence type="ECO:0000303" key="13">
    <source>
    </source>
</evidence>
<evidence type="ECO:0000303" key="14">
    <source>
    </source>
</evidence>
<evidence type="ECO:0000303" key="15">
    <source>
    </source>
</evidence>
<evidence type="ECO:0000305" key="16"/>
<evidence type="ECO:0000305" key="17">
    <source>
    </source>
</evidence>
<reference key="1">
    <citation type="journal article" date="2006" name="Nat. Genet.">
        <title>Nalp1b controls mouse macrophage susceptibility to anthrax lethal toxin.</title>
        <authorList>
            <person name="Boyden E.D."/>
            <person name="Dietrich W.F."/>
        </authorList>
    </citation>
    <scope>NUCLEOTIDE SEQUENCE [MRNA]</scope>
    <scope>FUNCTION</scope>
    <scope>TISSUE SPECIFICITY</scope>
    <source>
        <strain>AKR/J</strain>
        <strain>NOD/LtJ</strain>
        <strain>SJL/J</strain>
    </source>
</reference>
<reference key="2">
    <citation type="journal article" date="2009" name="Infect. Immun.">
        <title>Expression of Nlrp1b inflammasome components in human fibroblasts confers susceptibility to anthrax lethal toxin.</title>
        <authorList>
            <person name="Liao K.C."/>
            <person name="Mogridge J."/>
        </authorList>
    </citation>
    <scope>FUNCTION</scope>
    <scope>ACTIVITY REGULATION</scope>
    <scope>LACK OF RESPONSE TO BACILLUS ANTHRACIS LETHAL TOXIN</scope>
</reference>
<reference key="3">
    <citation type="journal article" date="2013" name="BMC Genomics">
        <title>Transcriptional analysis of the three Nlrp1 paralogs in mice.</title>
        <authorList>
            <person name="Sastalla I."/>
            <person name="Crown D."/>
            <person name="Masters S.L."/>
            <person name="McKenzie A."/>
            <person name="Leppla S.H."/>
            <person name="Moayeri M."/>
        </authorList>
    </citation>
    <scope>TISSUE SPECIFICITY</scope>
</reference>
<reference key="4">
    <citation type="journal article" date="2012" name="PLoS Pathog.">
        <title>Proteolytic processing of Nlrp1b is required for inflammasome activity.</title>
        <authorList>
            <person name="Frew B.C."/>
            <person name="Joag V.R."/>
            <person name="Mogridge J."/>
        </authorList>
    </citation>
    <scope>FUNCTION</scope>
    <scope>MUTAGENESIS OF ASP-927; ASP-935 AND SER-965</scope>
</reference>
<reference key="5">
    <citation type="journal article" date="2013" name="Infect. Immun.">
        <title>Activation of the Nlrp1b inflammasome by reduction of cytosolic ATP.</title>
        <authorList>
            <person name="Liao K.C."/>
            <person name="Mogridge J."/>
        </authorList>
    </citation>
    <scope>LACK OF RESPONSE TO ANTHRAX LETHAL TOXIN AND METABOLIC INHIBITORS</scope>
    <scope>ACTIVITY REGULATION</scope>
    <scope>FUNCTION</scope>
    <scope>MUTAGENESIS OF ASP-927</scope>
</reference>
<reference key="6">
    <citation type="journal article" date="2019" name="Cell Death Dis.">
        <title>DPP8/9 inhibitors are universal activators of functional NLRP1 alleles.</title>
        <authorList>
            <person name="Gai K."/>
            <person name="Okondo M.C."/>
            <person name="Rao S.D."/>
            <person name="Chui A.J."/>
            <person name="Ball D.P."/>
            <person name="Johnson D.C."/>
            <person name="Bachovchin D.A."/>
        </authorList>
    </citation>
    <scope>FUNCTION</scope>
    <scope>ACTIVITY REGULATION</scope>
    <scope>LACK OF PROTEOLYTIC CLEAVAGE</scope>
</reference>
<reference key="7">
    <citation type="journal article" date="2020" name="Immunol. Rev.">
        <title>The NLRP1 and CARD8 inflammasomes.</title>
        <authorList>
            <person name="Taabazuing C.Y."/>
            <person name="Griswold A.R."/>
            <person name="Bachovchin D.A."/>
        </authorList>
    </citation>
    <scope>REVIEW</scope>
</reference>
<gene>
    <name evidence="14" type="primary">Nlrp1b</name>
    <name evidence="13" type="synonym">Nalp1b</name>
</gene>
<protein>
    <recommendedName>
        <fullName evidence="13">NACHT, LRR and PYD domains-containing protein 1b allele 3</fullName>
    </recommendedName>
</protein>
<sequence length="1172" mass="133631">MEESPPKQKSNTKVAQHEGQQDLNTTRHMNVELKHRPKLERHLKLGMIPVVYMKQREEILYPAQSLKEENLIQNFTSLPLLQKLYPKDPENMVRKSWASCIPEEGGHMINIQDLFGPNIGTQKEPQLVIIEGAAGIGKSTLARLVKRAWKEGQLYRDHFQHVFFFSCRELAQCKKLSLAELIAQGQEVPTAPINQILSHPEKLLFILDGIDEPAWVLADQNPELCLHWSQRQPVHTLLGSLLGKSILPEAFFLLTTRTTALQKFIPSLPMPCQVEVLGFSGIERENYFYKYFANQRHAITAFMMVESNPVLLTLCEVPWVCWLVCTCLKKQMEQGRVLSLKSQTTTALCLKYPSLTIPDKHRRTQVKALCSLAAEGIWKRRTLFSESDLCKQGLDEDAVATFLKTGVLQKQASSLSYSFAHLCLQEFFAAISCILEDSEERHGNMEMDRIVETLVERYGRQNLFEAPTVRFLFGLLGKEGVKGMEKLFSCSLHGKTKLKLLWHILGKSQPHQPSCLGLLHCLYENQDMELLTHVMHDLQGTIVPGPNDIAHTVLQTNVKQLVVQTDMELMVATFCIQFYCHVRTLQLNMEKQQGYALTSPRMVLYRWTPITNASWEILFYNLKFTRNLEGLDLSGNSLRYSVVQSLCNTLRYPGCQLKTLWLVKCGLTSRYCSLLASVLSAHSSLTELYLQLNDLGDDGVRMLCEGLRNPVCNLSILWLDLSSLSAQVITELRTLEEKNPKLYIRSIWMPHMMVPTENMDEEAILTTFKQQRQESGDKPMEILGTEEDFWGPTGPVATELVDRVRNLYRVQLPMAGSYHCPSTGLHFVVTRAVTIEIEFCAWSQFLDKTPLQQSHMVVGPLFDIKAEQGAVTAVYLPHFVSLKDTEASTFDFKVAHFQEHGIVLETPDRVKPGYTVLKNPSFSPMGDVLRIIPADRHFIPITSITLIYYRLNLEEVTLHLYLVPSDCTIQKAIDDEEMKFQFVRINKPPPVDNLFIGSRYIVSGSENLEITPKELELCYRSSKEFQLFSEIYVGNMGSEIKLQIKNKKHMRLIWEALLKPGDLRPALPRIAQALKDAPSLLHFMDQHREQLVARVTSVDPLLDKLHGLVLNEESYEAVRAENTNQDKMRKLFNLSRSWSRACKDLFYQALKETHPHLVMDLLEKSGGVSLGS</sequence>
<comment type="function">
    <text evidence="1 7 8 10 12">May act as the sensor component of the Nlrp1b inflammasome, which mediates inflammasome activation in response to various pathogen-associated signals, leading to subsequent pyroptosis (By similarity). Inflammasomes are supramolecular complexes that assemble in the cytosol in response to pathogens and other damage-associated signals and play critical roles in innate immunity and inflammation (By similarity). May act as a recognition receptor (PRR), which recognizes specific pathogens and other damage-associated signals and forms an inflammasome complex: the inflammasome directly recruits pro-caspase-1 (proCASP1) independently of PYCARD/ASC and promotes caspase-1 (CASP1) activation, which subsequently cleaves and activates inflammatory cytokines IL1B and IL18 and gasdermin-D (GSDMD), leading to pyroptosis (By similarity). In the absence of GSDMD expression, the Nlrp1b inflammasome is able to recruit and activate CASP8, leading to activation of gasdermin-E (GSDME) (By similarity). Contrary to Nlrp1b allele 1, allele 3 is not activated by Bacillus anthracis lethal toxin (PubMed:16429160, PubMed:19651869, PubMed:23230290). The absence of autocatalytic cleavage within the FIIND domain, which regulates activation in other alleles, suggests that allele 3 may be non-functional (PubMed:31383852).</text>
</comment>
<comment type="activity regulation">
    <text evidence="7 10 12 15">In contrast to allele 1, does not undergo autocatalytic cleavage within the FIIND domain and its mode of activation remains unclear (PubMed:32558991). In contrast to alleles 1 and 2, allele 3 is not activated by Val-boroPro (Talabostat, PT-100) (PubMed:31383852). Not activated by cleavage by B.anthracis lethal toxin (LT) endopeptidase (PubMed:16429160, PubMed:23230290, PubMed:31383852). Not activated by metabolic inhibitors, such as 2-deoxy-D-glucose and sodium azide (PubMed:23230290).</text>
</comment>
<comment type="subcellular location">
    <subcellularLocation>
        <location evidence="1">Cytoplasm</location>
        <location evidence="1">Cytosol</location>
    </subcellularLocation>
</comment>
<comment type="tissue specificity">
    <text evidence="7 11">Expressed in macrophages.</text>
</comment>
<comment type="domain">
    <text evidence="9">The FIIND (domain with function to find) region may be involved in homomerization, but not in CASP1-binding. Contrary to allele 1, allele 3 does not undergo autocatalytic cleavage in this region.</text>
</comment>
<comment type="PTM">
    <text evidence="9 12">In contrast to allele 1 and 2, not able to mediate autocatalytic cleavage.</text>
</comment>
<comment type="polymorphism">
    <text evidence="7 13">Nlrp1b gene is extremely polymorphic. 5 alleles have been described in 18 inbred strains: 1 (AC Q2LKW6), 2 (AC A1Z198), 3 (this entry), 4 (AC Q2LKV2) and 5 (AC Q0GKD5). These alleles define susceptibility to B.anthracis lethal toxin (LT). Alleles 2 (carried by A/J, C57BL/6J and I/LnJ), 3 (AKR/J, NOD/LtJ and SJL/J) or 4 (DBA/2J, P/J and SM/J) are not activated by LT. Alleles 1 (carried by 129S1/SvImJ, BALB/cJ, C3H/HeJ, CBA/J, FVB/NJ, NON/ShiLtJ, NZO (NZO/HlLtJ) and SWR/J strains) and 5 (CAST/EiJ) confer macrophage susceptibility to LT. In susceptible strains, infection by Bacillus anthracis leads to IL1B release, neutrophil recruitment and macrophage pyroptosis. This early inflammatory response confers increased resistance to infection (PubMed:16429160). The sequence shown in this entry is that of allele 3 (PubMed:16429160).</text>
</comment>
<comment type="miscellaneous">
    <text evidence="11 17">Three tandem Nrlp1 paralogs, Nrlp1a, Nrlp1b and Nrlp1c, have been identified. Nlrp1c is predicted to be a pseudogene.</text>
</comment>
<comment type="miscellaneous">
    <text evidence="1">In macrophages and dendritic cells, NLRP1 inflammasome activation of CASP1 and IL1B maturation can be dampened by direct contact with activated effector and memory T-cells. This effect may be mediated by hexameric TNF ligands, such as CD40LG.</text>
</comment>
<comment type="similarity">
    <text evidence="16">Belongs to the NLRP family.</text>
</comment>
<organism>
    <name type="scientific">Mus musculus</name>
    <name type="common">Mouse</name>
    <dbReference type="NCBI Taxonomy" id="10090"/>
    <lineage>
        <taxon>Eukaryota</taxon>
        <taxon>Metazoa</taxon>
        <taxon>Chordata</taxon>
        <taxon>Craniata</taxon>
        <taxon>Vertebrata</taxon>
        <taxon>Euteleostomi</taxon>
        <taxon>Mammalia</taxon>
        <taxon>Eutheria</taxon>
        <taxon>Euarchontoglires</taxon>
        <taxon>Glires</taxon>
        <taxon>Rodentia</taxon>
        <taxon>Myomorpha</taxon>
        <taxon>Muroidea</taxon>
        <taxon>Muridae</taxon>
        <taxon>Murinae</taxon>
        <taxon>Mus</taxon>
        <taxon>Mus</taxon>
    </lineage>
</organism>
<accession>Q2LKV5</accession>